<reference key="1">
    <citation type="journal article" date="2003" name="Nat. Genet.">
        <title>Comparative analysis of the genome sequences of Bordetella pertussis, Bordetella parapertussis and Bordetella bronchiseptica.</title>
        <authorList>
            <person name="Parkhill J."/>
            <person name="Sebaihia M."/>
            <person name="Preston A."/>
            <person name="Murphy L.D."/>
            <person name="Thomson N.R."/>
            <person name="Harris D.E."/>
            <person name="Holden M.T.G."/>
            <person name="Churcher C.M."/>
            <person name="Bentley S.D."/>
            <person name="Mungall K.L."/>
            <person name="Cerdeno-Tarraga A.-M."/>
            <person name="Temple L."/>
            <person name="James K.D."/>
            <person name="Harris B."/>
            <person name="Quail M.A."/>
            <person name="Achtman M."/>
            <person name="Atkin R."/>
            <person name="Baker S."/>
            <person name="Basham D."/>
            <person name="Bason N."/>
            <person name="Cherevach I."/>
            <person name="Chillingworth T."/>
            <person name="Collins M."/>
            <person name="Cronin A."/>
            <person name="Davis P."/>
            <person name="Doggett J."/>
            <person name="Feltwell T."/>
            <person name="Goble A."/>
            <person name="Hamlin N."/>
            <person name="Hauser H."/>
            <person name="Holroyd S."/>
            <person name="Jagels K."/>
            <person name="Leather S."/>
            <person name="Moule S."/>
            <person name="Norberczak H."/>
            <person name="O'Neil S."/>
            <person name="Ormond D."/>
            <person name="Price C."/>
            <person name="Rabbinowitsch E."/>
            <person name="Rutter S."/>
            <person name="Sanders M."/>
            <person name="Saunders D."/>
            <person name="Seeger K."/>
            <person name="Sharp S."/>
            <person name="Simmonds M."/>
            <person name="Skelton J."/>
            <person name="Squares R."/>
            <person name="Squares S."/>
            <person name="Stevens K."/>
            <person name="Unwin L."/>
            <person name="Whitehead S."/>
            <person name="Barrell B.G."/>
            <person name="Maskell D.J."/>
        </authorList>
    </citation>
    <scope>NUCLEOTIDE SEQUENCE [LARGE SCALE GENOMIC DNA]</scope>
    <source>
        <strain>ATCC BAA-588 / NCTC 13252 / RB50</strain>
    </source>
</reference>
<comment type="function">
    <text evidence="1">Catalyzes the 2-thiolation of uridine at the wobble position (U34) of tRNA, leading to the formation of s(2)U34.</text>
</comment>
<comment type="catalytic activity">
    <reaction evidence="1">
        <text>S-sulfanyl-L-cysteinyl-[protein] + uridine(34) in tRNA + AH2 + ATP = 2-thiouridine(34) in tRNA + L-cysteinyl-[protein] + A + AMP + diphosphate + H(+)</text>
        <dbReference type="Rhea" id="RHEA:47032"/>
        <dbReference type="Rhea" id="RHEA-COMP:10131"/>
        <dbReference type="Rhea" id="RHEA-COMP:11726"/>
        <dbReference type="Rhea" id="RHEA-COMP:11727"/>
        <dbReference type="Rhea" id="RHEA-COMP:11728"/>
        <dbReference type="ChEBI" id="CHEBI:13193"/>
        <dbReference type="ChEBI" id="CHEBI:15378"/>
        <dbReference type="ChEBI" id="CHEBI:17499"/>
        <dbReference type="ChEBI" id="CHEBI:29950"/>
        <dbReference type="ChEBI" id="CHEBI:30616"/>
        <dbReference type="ChEBI" id="CHEBI:33019"/>
        <dbReference type="ChEBI" id="CHEBI:61963"/>
        <dbReference type="ChEBI" id="CHEBI:65315"/>
        <dbReference type="ChEBI" id="CHEBI:87170"/>
        <dbReference type="ChEBI" id="CHEBI:456215"/>
        <dbReference type="EC" id="2.8.1.13"/>
    </reaction>
</comment>
<comment type="subcellular location">
    <subcellularLocation>
        <location evidence="1">Cytoplasm</location>
    </subcellularLocation>
</comment>
<comment type="similarity">
    <text evidence="1">Belongs to the MnmA/TRMU family.</text>
</comment>
<protein>
    <recommendedName>
        <fullName evidence="1">tRNA-specific 2-thiouridylase MnmA</fullName>
        <ecNumber evidence="1">2.8.1.13</ecNumber>
    </recommendedName>
</protein>
<sequence>MPSNPTRKGRVVVGMSGGVDSSVTAWLLKQQGYEVVGLFMKNWEDDDDSEYCSTRQDLLDAASVADLVGVEFEYVNFAAEYKDRVFAEFLREYSAGRTPNPDVLCNAEIKFKAFLDHAMALGAEHIATGHYARVRTVETPAGPRHQLLKALDDTKDQSYFLHRLNQVQLARTLFPLGELRKTEVRRIAHEIGLHNAAKKDSTGICFIGERPFREFLNRYLPSEPGPILTPEGQRVGTHHGLSFYTLGQRKGLGVGGVKGRQRDDGTAEAWYAARKDLARNVLYVVQGHDHPWLLSAQLQAQDASWIAGEPPAAGAYGAKTRYRQADAACRLDQAGGERFALAFEQAQWAVTPGQSAVLYDGEVCLGGGIII</sequence>
<accession>Q7U387</accession>
<proteinExistence type="inferred from homology"/>
<name>MNMA_BORBR</name>
<feature type="chain" id="PRO_0000349540" description="tRNA-specific 2-thiouridylase MnmA">
    <location>
        <begin position="1"/>
        <end position="371"/>
    </location>
</feature>
<feature type="region of interest" description="Interaction with target base in tRNA" evidence="1">
    <location>
        <begin position="100"/>
        <end position="102"/>
    </location>
</feature>
<feature type="region of interest" description="Interaction with tRNA" evidence="1">
    <location>
        <begin position="155"/>
        <end position="157"/>
    </location>
</feature>
<feature type="region of interest" description="Interaction with tRNA" evidence="1">
    <location>
        <begin position="321"/>
        <end position="322"/>
    </location>
</feature>
<feature type="active site" description="Nucleophile" evidence="1">
    <location>
        <position position="105"/>
    </location>
</feature>
<feature type="active site" description="Cysteine persulfide intermediate" evidence="1">
    <location>
        <position position="205"/>
    </location>
</feature>
<feature type="binding site" evidence="1">
    <location>
        <begin position="14"/>
        <end position="21"/>
    </location>
    <ligand>
        <name>ATP</name>
        <dbReference type="ChEBI" id="CHEBI:30616"/>
    </ligand>
</feature>
<feature type="binding site" evidence="1">
    <location>
        <position position="40"/>
    </location>
    <ligand>
        <name>ATP</name>
        <dbReference type="ChEBI" id="CHEBI:30616"/>
    </ligand>
</feature>
<feature type="binding site" evidence="1">
    <location>
        <position position="129"/>
    </location>
    <ligand>
        <name>ATP</name>
        <dbReference type="ChEBI" id="CHEBI:30616"/>
    </ligand>
</feature>
<feature type="site" description="Interaction with tRNA" evidence="1">
    <location>
        <position position="130"/>
    </location>
</feature>
<feature type="site" description="Interaction with tRNA" evidence="1">
    <location>
        <position position="354"/>
    </location>
</feature>
<feature type="disulfide bond" description="Alternate" evidence="1">
    <location>
        <begin position="105"/>
        <end position="205"/>
    </location>
</feature>
<evidence type="ECO:0000255" key="1">
    <source>
        <dbReference type="HAMAP-Rule" id="MF_00144"/>
    </source>
</evidence>
<dbReference type="EC" id="2.8.1.13" evidence="1"/>
<dbReference type="EMBL" id="BX640442">
    <property type="protein sequence ID" value="CAE32447.1"/>
    <property type="molecule type" value="Genomic_DNA"/>
</dbReference>
<dbReference type="RefSeq" id="WP_003813026.1">
    <property type="nucleotide sequence ID" value="NC_002927.3"/>
</dbReference>
<dbReference type="SMR" id="Q7U387"/>
<dbReference type="GeneID" id="69602818"/>
<dbReference type="KEGG" id="bbr:BB1950"/>
<dbReference type="eggNOG" id="COG0482">
    <property type="taxonomic scope" value="Bacteria"/>
</dbReference>
<dbReference type="HOGENOM" id="CLU_035188_1_0_4"/>
<dbReference type="Proteomes" id="UP000001027">
    <property type="component" value="Chromosome"/>
</dbReference>
<dbReference type="GO" id="GO:0005737">
    <property type="term" value="C:cytoplasm"/>
    <property type="evidence" value="ECO:0007669"/>
    <property type="project" value="UniProtKB-SubCell"/>
</dbReference>
<dbReference type="GO" id="GO:0005524">
    <property type="term" value="F:ATP binding"/>
    <property type="evidence" value="ECO:0007669"/>
    <property type="project" value="UniProtKB-KW"/>
</dbReference>
<dbReference type="GO" id="GO:0000049">
    <property type="term" value="F:tRNA binding"/>
    <property type="evidence" value="ECO:0007669"/>
    <property type="project" value="UniProtKB-KW"/>
</dbReference>
<dbReference type="GO" id="GO:0103016">
    <property type="term" value="F:tRNA-uridine 2-sulfurtransferase activity"/>
    <property type="evidence" value="ECO:0007669"/>
    <property type="project" value="UniProtKB-EC"/>
</dbReference>
<dbReference type="GO" id="GO:0002143">
    <property type="term" value="P:tRNA wobble position uridine thiolation"/>
    <property type="evidence" value="ECO:0007669"/>
    <property type="project" value="TreeGrafter"/>
</dbReference>
<dbReference type="CDD" id="cd01998">
    <property type="entry name" value="MnmA_TRMU-like"/>
    <property type="match status" value="1"/>
</dbReference>
<dbReference type="FunFam" id="2.30.30.280:FF:000001">
    <property type="entry name" value="tRNA-specific 2-thiouridylase MnmA"/>
    <property type="match status" value="1"/>
</dbReference>
<dbReference type="FunFam" id="2.40.30.10:FF:000023">
    <property type="entry name" value="tRNA-specific 2-thiouridylase MnmA"/>
    <property type="match status" value="1"/>
</dbReference>
<dbReference type="FunFam" id="3.40.50.620:FF:000004">
    <property type="entry name" value="tRNA-specific 2-thiouridylase MnmA"/>
    <property type="match status" value="1"/>
</dbReference>
<dbReference type="Gene3D" id="2.30.30.280">
    <property type="entry name" value="Adenine nucleotide alpha hydrolases-like domains"/>
    <property type="match status" value="1"/>
</dbReference>
<dbReference type="Gene3D" id="3.40.50.620">
    <property type="entry name" value="HUPs"/>
    <property type="match status" value="1"/>
</dbReference>
<dbReference type="Gene3D" id="2.40.30.10">
    <property type="entry name" value="Translation factors"/>
    <property type="match status" value="1"/>
</dbReference>
<dbReference type="HAMAP" id="MF_00144">
    <property type="entry name" value="tRNA_thiouridyl_MnmA"/>
    <property type="match status" value="1"/>
</dbReference>
<dbReference type="InterPro" id="IPR004506">
    <property type="entry name" value="MnmA-like"/>
</dbReference>
<dbReference type="InterPro" id="IPR046885">
    <property type="entry name" value="MnmA-like_C"/>
</dbReference>
<dbReference type="InterPro" id="IPR046884">
    <property type="entry name" value="MnmA-like_central"/>
</dbReference>
<dbReference type="InterPro" id="IPR023382">
    <property type="entry name" value="MnmA-like_central_sf"/>
</dbReference>
<dbReference type="InterPro" id="IPR014729">
    <property type="entry name" value="Rossmann-like_a/b/a_fold"/>
</dbReference>
<dbReference type="NCBIfam" id="NF001138">
    <property type="entry name" value="PRK00143.1"/>
    <property type="match status" value="1"/>
</dbReference>
<dbReference type="NCBIfam" id="TIGR00420">
    <property type="entry name" value="trmU"/>
    <property type="match status" value="1"/>
</dbReference>
<dbReference type="PANTHER" id="PTHR11933:SF5">
    <property type="entry name" value="MITOCHONDRIAL TRNA-SPECIFIC 2-THIOURIDYLASE 1"/>
    <property type="match status" value="1"/>
</dbReference>
<dbReference type="PANTHER" id="PTHR11933">
    <property type="entry name" value="TRNA 5-METHYLAMINOMETHYL-2-THIOURIDYLATE -METHYLTRANSFERASE"/>
    <property type="match status" value="1"/>
</dbReference>
<dbReference type="Pfam" id="PF03054">
    <property type="entry name" value="tRNA_Me_trans"/>
    <property type="match status" value="1"/>
</dbReference>
<dbReference type="Pfam" id="PF20258">
    <property type="entry name" value="tRNA_Me_trans_C"/>
    <property type="match status" value="1"/>
</dbReference>
<dbReference type="Pfam" id="PF20259">
    <property type="entry name" value="tRNA_Me_trans_M"/>
    <property type="match status" value="1"/>
</dbReference>
<dbReference type="SUPFAM" id="SSF52402">
    <property type="entry name" value="Adenine nucleotide alpha hydrolases-like"/>
    <property type="match status" value="1"/>
</dbReference>
<keyword id="KW-0067">ATP-binding</keyword>
<keyword id="KW-0963">Cytoplasm</keyword>
<keyword id="KW-1015">Disulfide bond</keyword>
<keyword id="KW-0547">Nucleotide-binding</keyword>
<keyword id="KW-0694">RNA-binding</keyword>
<keyword id="KW-0808">Transferase</keyword>
<keyword id="KW-0819">tRNA processing</keyword>
<keyword id="KW-0820">tRNA-binding</keyword>
<organism>
    <name type="scientific">Bordetella bronchiseptica (strain ATCC BAA-588 / NCTC 13252 / RB50)</name>
    <name type="common">Alcaligenes bronchisepticus</name>
    <dbReference type="NCBI Taxonomy" id="257310"/>
    <lineage>
        <taxon>Bacteria</taxon>
        <taxon>Pseudomonadati</taxon>
        <taxon>Pseudomonadota</taxon>
        <taxon>Betaproteobacteria</taxon>
        <taxon>Burkholderiales</taxon>
        <taxon>Alcaligenaceae</taxon>
        <taxon>Bordetella</taxon>
    </lineage>
</organism>
<gene>
    <name evidence="1" type="primary">mnmA</name>
    <name type="ordered locus">BB1950</name>
</gene>